<keyword id="KW-0687">Ribonucleoprotein</keyword>
<keyword id="KW-0689">Ribosomal protein</keyword>
<keyword id="KW-0694">RNA-binding</keyword>
<keyword id="KW-0699">rRNA-binding</keyword>
<proteinExistence type="inferred from homology"/>
<sequence>MTRVKSGKISKNRHKKILKLAKGYRGRANSCFRVAIEKVEKALQYAYRDRRNRKRDFRGLWIQRINAAVREHELVYSQFMGALKKAGIDINRKVLAELAVNNSDGFVSIVEKAKAHI</sequence>
<gene>
    <name evidence="1" type="primary">rplT</name>
    <name type="ordered locus">RMA_0964</name>
</gene>
<reference key="1">
    <citation type="journal article" date="2007" name="Genome Res.">
        <title>Lateral gene transfer between obligate intracellular bacteria: evidence from the Rickettsia massiliae genome.</title>
        <authorList>
            <person name="Blanc G."/>
            <person name="Ogata H."/>
            <person name="Robert C."/>
            <person name="Audic S."/>
            <person name="Claverie J.-M."/>
            <person name="Raoult D."/>
        </authorList>
    </citation>
    <scope>NUCLEOTIDE SEQUENCE [LARGE SCALE GENOMIC DNA]</scope>
    <source>
        <strain>Mtu5</strain>
    </source>
</reference>
<organism>
    <name type="scientific">Rickettsia massiliae (strain Mtu5)</name>
    <dbReference type="NCBI Taxonomy" id="416276"/>
    <lineage>
        <taxon>Bacteria</taxon>
        <taxon>Pseudomonadati</taxon>
        <taxon>Pseudomonadota</taxon>
        <taxon>Alphaproteobacteria</taxon>
        <taxon>Rickettsiales</taxon>
        <taxon>Rickettsiaceae</taxon>
        <taxon>Rickettsieae</taxon>
        <taxon>Rickettsia</taxon>
        <taxon>spotted fever group</taxon>
    </lineage>
</organism>
<protein>
    <recommendedName>
        <fullName evidence="1">Large ribosomal subunit protein bL20</fullName>
    </recommendedName>
    <alternativeName>
        <fullName evidence="2">50S ribosomal protein L20</fullName>
    </alternativeName>
</protein>
<accession>A8F291</accession>
<name>RL20_RICM5</name>
<comment type="function">
    <text evidence="1">Binds directly to 23S ribosomal RNA and is necessary for the in vitro assembly process of the 50S ribosomal subunit. It is not involved in the protein synthesizing functions of that subunit.</text>
</comment>
<comment type="similarity">
    <text evidence="1">Belongs to the bacterial ribosomal protein bL20 family.</text>
</comment>
<dbReference type="EMBL" id="CP000683">
    <property type="protein sequence ID" value="ABV85027.1"/>
    <property type="molecule type" value="Genomic_DNA"/>
</dbReference>
<dbReference type="RefSeq" id="WP_012152997.1">
    <property type="nucleotide sequence ID" value="NC_009900.1"/>
</dbReference>
<dbReference type="SMR" id="A8F291"/>
<dbReference type="KEGG" id="rms:RMA_0964"/>
<dbReference type="HOGENOM" id="CLU_123265_0_1_5"/>
<dbReference type="Proteomes" id="UP000001311">
    <property type="component" value="Chromosome"/>
</dbReference>
<dbReference type="GO" id="GO:1990904">
    <property type="term" value="C:ribonucleoprotein complex"/>
    <property type="evidence" value="ECO:0007669"/>
    <property type="project" value="UniProtKB-KW"/>
</dbReference>
<dbReference type="GO" id="GO:0005840">
    <property type="term" value="C:ribosome"/>
    <property type="evidence" value="ECO:0007669"/>
    <property type="project" value="UniProtKB-KW"/>
</dbReference>
<dbReference type="GO" id="GO:0019843">
    <property type="term" value="F:rRNA binding"/>
    <property type="evidence" value="ECO:0007669"/>
    <property type="project" value="UniProtKB-UniRule"/>
</dbReference>
<dbReference type="GO" id="GO:0003735">
    <property type="term" value="F:structural constituent of ribosome"/>
    <property type="evidence" value="ECO:0007669"/>
    <property type="project" value="InterPro"/>
</dbReference>
<dbReference type="GO" id="GO:0000027">
    <property type="term" value="P:ribosomal large subunit assembly"/>
    <property type="evidence" value="ECO:0007669"/>
    <property type="project" value="UniProtKB-UniRule"/>
</dbReference>
<dbReference type="GO" id="GO:0006412">
    <property type="term" value="P:translation"/>
    <property type="evidence" value="ECO:0007669"/>
    <property type="project" value="InterPro"/>
</dbReference>
<dbReference type="CDD" id="cd07026">
    <property type="entry name" value="Ribosomal_L20"/>
    <property type="match status" value="1"/>
</dbReference>
<dbReference type="FunFam" id="1.10.1900.20:FF:000001">
    <property type="entry name" value="50S ribosomal protein L20"/>
    <property type="match status" value="1"/>
</dbReference>
<dbReference type="Gene3D" id="6.10.160.10">
    <property type="match status" value="1"/>
</dbReference>
<dbReference type="Gene3D" id="1.10.1900.20">
    <property type="entry name" value="Ribosomal protein L20"/>
    <property type="match status" value="1"/>
</dbReference>
<dbReference type="HAMAP" id="MF_00382">
    <property type="entry name" value="Ribosomal_bL20"/>
    <property type="match status" value="1"/>
</dbReference>
<dbReference type="InterPro" id="IPR005813">
    <property type="entry name" value="Ribosomal_bL20"/>
</dbReference>
<dbReference type="InterPro" id="IPR049946">
    <property type="entry name" value="RIBOSOMAL_L20_CS"/>
</dbReference>
<dbReference type="InterPro" id="IPR035566">
    <property type="entry name" value="Ribosomal_protein_bL20_C"/>
</dbReference>
<dbReference type="NCBIfam" id="TIGR01032">
    <property type="entry name" value="rplT_bact"/>
    <property type="match status" value="1"/>
</dbReference>
<dbReference type="PANTHER" id="PTHR10986">
    <property type="entry name" value="39S RIBOSOMAL PROTEIN L20"/>
    <property type="match status" value="1"/>
</dbReference>
<dbReference type="Pfam" id="PF00453">
    <property type="entry name" value="Ribosomal_L20"/>
    <property type="match status" value="1"/>
</dbReference>
<dbReference type="PRINTS" id="PR00062">
    <property type="entry name" value="RIBOSOMALL20"/>
</dbReference>
<dbReference type="SUPFAM" id="SSF74731">
    <property type="entry name" value="Ribosomal protein L20"/>
    <property type="match status" value="1"/>
</dbReference>
<dbReference type="PROSITE" id="PS00937">
    <property type="entry name" value="RIBOSOMAL_L20"/>
    <property type="match status" value="1"/>
</dbReference>
<feature type="chain" id="PRO_1000060691" description="Large ribosomal subunit protein bL20">
    <location>
        <begin position="1"/>
        <end position="117"/>
    </location>
</feature>
<evidence type="ECO:0000255" key="1">
    <source>
        <dbReference type="HAMAP-Rule" id="MF_00382"/>
    </source>
</evidence>
<evidence type="ECO:0000305" key="2"/>